<evidence type="ECO:0000250" key="1">
    <source>
        <dbReference type="UniProtKB" id="Q9X2H6"/>
    </source>
</evidence>
<evidence type="ECO:0000255" key="2">
    <source>
        <dbReference type="PROSITE-ProRule" id="PRU01266"/>
    </source>
</evidence>
<evidence type="ECO:0000269" key="3">
    <source>
    </source>
</evidence>
<evidence type="ECO:0000269" key="4">
    <source>
    </source>
</evidence>
<evidence type="ECO:0000303" key="5">
    <source>
    </source>
</evidence>
<evidence type="ECO:0000305" key="6"/>
<evidence type="ECO:0000312" key="7">
    <source>
        <dbReference type="EMBL" id="ACF02765.1"/>
    </source>
</evidence>
<protein>
    <recommendedName>
        <fullName evidence="6">Hopanoid C-2 methylase</fullName>
        <ecNumber evidence="6">2.1.1.-</ecNumber>
    </recommendedName>
</protein>
<gene>
    <name evidence="5" type="primary">hpnP</name>
    <name evidence="7" type="ordered locus">Rpal_4269</name>
</gene>
<comment type="function">
    <text evidence="3">Required for methylation of hopanoids at the C-2 position.</text>
</comment>
<comment type="cofactor">
    <cofactor evidence="1">
        <name>[4Fe-4S] cluster</name>
        <dbReference type="ChEBI" id="CHEBI:49883"/>
    </cofactor>
    <text evidence="1">Binds 1 [4Fe-4S] cluster. The cluster is coordinated with 3 cysteines and an exchangeable S-adenosyl-L-methionine.</text>
</comment>
<comment type="induction">
    <text evidence="4">Up-regulated in an EcfG-dependent manner under a variety of stresses, including high-temperature, acidic, alkaline and hyperosmotic conditions.</text>
</comment>
<comment type="disruption phenotype">
    <text evidence="3">Deletion mutant does not produce C-2 methylated triterpenoids.</text>
</comment>
<comment type="similarity">
    <text evidence="6">Belongs to the radical SAM superfamily.</text>
</comment>
<organism>
    <name type="scientific">Rhodopseudomonas palustris (strain TIE-1)</name>
    <dbReference type="NCBI Taxonomy" id="395960"/>
    <lineage>
        <taxon>Bacteria</taxon>
        <taxon>Pseudomonadati</taxon>
        <taxon>Pseudomonadota</taxon>
        <taxon>Alphaproteobacteria</taxon>
        <taxon>Hyphomicrobiales</taxon>
        <taxon>Nitrobacteraceae</taxon>
        <taxon>Rhodopseudomonas</taxon>
    </lineage>
</organism>
<sequence>MKAESGQTSRRILCVFPRYTKSFGTFQHSYPLMDDVAAFMPPQGLLVIAAYLPDEWSVRFVDENIRAATADDFAWADAVFVSGMHIQRQQMNDICRRAHDFDLPVALGGPSVSACPDYYPNFDYLHVGELGDATDQLIAKLTHDVTRPKRQVVFTTEDRLDMTLFPIPAYELAECSKYLLGSIQYSSGCPYQCEFCDIPGLYGRNPRLKTPEQIITELDRMIECGIRGSVYFVDDNFIGNRKAALDLLPHLVEWQKRTGFQLQLACEATLNIAKRPEILELMREAYFCTIFVGIETPDPTALKAMHKDHNMMVPILEGVRTISSYGIEVVSGIILGLDTDTPETGEFLMQFIEQSQIPLLTINLLQALPKTPLWDRLQREGRLVHDDNRESNVDFLLPHDQVVAMWKDCMARAYQPEALLKRYDYQIAHAYATRLHPSTPQRASKANIKRGMIMLRNIIWQIGIRGDYKLAFWKFALRRLIRGDIENLLLVMVVAHHLIIYAREASRGHANASNYSIRLREAAVPAE</sequence>
<dbReference type="EC" id="2.1.1.-" evidence="6"/>
<dbReference type="EMBL" id="CP001096">
    <property type="protein sequence ID" value="ACF02765.1"/>
    <property type="molecule type" value="Genomic_DNA"/>
</dbReference>
<dbReference type="RefSeq" id="WP_012497138.1">
    <property type="nucleotide sequence ID" value="NC_011004.1"/>
</dbReference>
<dbReference type="SMR" id="B3QHD1"/>
<dbReference type="KEGG" id="rpt:Rpal_4269"/>
<dbReference type="HOGENOM" id="CLU_021572_5_0_5"/>
<dbReference type="OrthoDB" id="9801424at2"/>
<dbReference type="BioCyc" id="MetaCyc:MONOMER-17493"/>
<dbReference type="Proteomes" id="UP000001725">
    <property type="component" value="Chromosome"/>
</dbReference>
<dbReference type="GO" id="GO:0005829">
    <property type="term" value="C:cytosol"/>
    <property type="evidence" value="ECO:0007669"/>
    <property type="project" value="TreeGrafter"/>
</dbReference>
<dbReference type="GO" id="GO:0031419">
    <property type="term" value="F:cobalamin binding"/>
    <property type="evidence" value="ECO:0007669"/>
    <property type="project" value="InterPro"/>
</dbReference>
<dbReference type="GO" id="GO:0051536">
    <property type="term" value="F:iron-sulfur cluster binding"/>
    <property type="evidence" value="ECO:0007669"/>
    <property type="project" value="UniProtKB-KW"/>
</dbReference>
<dbReference type="GO" id="GO:0046872">
    <property type="term" value="F:metal ion binding"/>
    <property type="evidence" value="ECO:0007669"/>
    <property type="project" value="UniProtKB-KW"/>
</dbReference>
<dbReference type="GO" id="GO:0008168">
    <property type="term" value="F:methyltransferase activity"/>
    <property type="evidence" value="ECO:0007669"/>
    <property type="project" value="UniProtKB-KW"/>
</dbReference>
<dbReference type="GO" id="GO:0032259">
    <property type="term" value="P:methylation"/>
    <property type="evidence" value="ECO:0007669"/>
    <property type="project" value="UniProtKB-KW"/>
</dbReference>
<dbReference type="Gene3D" id="3.80.30.20">
    <property type="entry name" value="tm_1862 like domain"/>
    <property type="match status" value="1"/>
</dbReference>
<dbReference type="InterPro" id="IPR006158">
    <property type="entry name" value="Cobalamin-bd"/>
</dbReference>
<dbReference type="InterPro" id="IPR025274">
    <property type="entry name" value="DUF4070"/>
</dbReference>
<dbReference type="InterPro" id="IPR006638">
    <property type="entry name" value="Elp3/MiaA/NifB-like_rSAM"/>
</dbReference>
<dbReference type="InterPro" id="IPR034530">
    <property type="entry name" value="HpnP-like"/>
</dbReference>
<dbReference type="InterPro" id="IPR007197">
    <property type="entry name" value="rSAM"/>
</dbReference>
<dbReference type="InterPro" id="IPR023404">
    <property type="entry name" value="rSAM_horseshoe"/>
</dbReference>
<dbReference type="InterPro" id="IPR051198">
    <property type="entry name" value="Tetrapyrrole_Bchl_Biosynth_MTs"/>
</dbReference>
<dbReference type="PANTHER" id="PTHR43409">
    <property type="entry name" value="ANAEROBIC MAGNESIUM-PROTOPORPHYRIN IX MONOMETHYL ESTER CYCLASE-RELATED"/>
    <property type="match status" value="1"/>
</dbReference>
<dbReference type="PANTHER" id="PTHR43409:SF9">
    <property type="entry name" value="BLR2995 PROTEIN"/>
    <property type="match status" value="1"/>
</dbReference>
<dbReference type="Pfam" id="PF02310">
    <property type="entry name" value="B12-binding"/>
    <property type="match status" value="1"/>
</dbReference>
<dbReference type="Pfam" id="PF13282">
    <property type="entry name" value="DUF4070"/>
    <property type="match status" value="1"/>
</dbReference>
<dbReference type="Pfam" id="PF04055">
    <property type="entry name" value="Radical_SAM"/>
    <property type="match status" value="1"/>
</dbReference>
<dbReference type="SFLD" id="SFLDG01082">
    <property type="entry name" value="B12-binding_domain_containing"/>
    <property type="match status" value="1"/>
</dbReference>
<dbReference type="SFLD" id="SFLDF00303">
    <property type="entry name" value="hopanoid_C2-methyltransferase"/>
    <property type="match status" value="1"/>
</dbReference>
<dbReference type="SMART" id="SM00729">
    <property type="entry name" value="Elp3"/>
    <property type="match status" value="1"/>
</dbReference>
<dbReference type="SUPFAM" id="SSF102114">
    <property type="entry name" value="Radical SAM enzymes"/>
    <property type="match status" value="1"/>
</dbReference>
<dbReference type="PROSITE" id="PS51918">
    <property type="entry name" value="RADICAL_SAM"/>
    <property type="match status" value="1"/>
</dbReference>
<reference key="1">
    <citation type="submission" date="2008-05" db="EMBL/GenBank/DDBJ databases">
        <title>Complete sequence of Rhodopseudomonas palustris TIE-1.</title>
        <authorList>
            <consortium name="US DOE Joint Genome Institute"/>
            <person name="Lucas S."/>
            <person name="Copeland A."/>
            <person name="Lapidus A."/>
            <person name="Glavina del Rio T."/>
            <person name="Dalin E."/>
            <person name="Tice H."/>
            <person name="Pitluck S."/>
            <person name="Chain P."/>
            <person name="Malfatti S."/>
            <person name="Shin M."/>
            <person name="Vergez L."/>
            <person name="Lang D."/>
            <person name="Schmutz J."/>
            <person name="Larimer F."/>
            <person name="Land M."/>
            <person name="Hauser L."/>
            <person name="Kyrpides N."/>
            <person name="Mikhailova N."/>
            <person name="Emerson D."/>
            <person name="Newman D.K."/>
            <person name="Roden E."/>
            <person name="Richardson P."/>
        </authorList>
    </citation>
    <scope>NUCLEOTIDE SEQUENCE [LARGE SCALE GENOMIC DNA]</scope>
    <source>
        <strain>TIE-1</strain>
    </source>
</reference>
<reference key="2">
    <citation type="journal article" date="2010" name="Proc. Natl. Acad. Sci. U.S.A.">
        <title>Identification of a methylase required for 2-methylhopanoid production and implications for the interpretation of sedimentary hopanes.</title>
        <authorList>
            <person name="Welander P.V."/>
            <person name="Coleman M.L."/>
            <person name="Sessions A.L."/>
            <person name="Summons R.E."/>
            <person name="Newman D.K."/>
        </authorList>
    </citation>
    <scope>FUNCTION IN METHYLATION OF HOPANOIDS</scope>
    <scope>DISRUPTION PHENOTYPE</scope>
    <source>
        <strain>TIE-1</strain>
    </source>
</reference>
<reference key="3">
    <citation type="journal article" date="2013" name="J. Bacteriol.">
        <title>The general stress response factor EcfG regulates expression of the C-2 hopanoid methylase HpnP in Rhodopseudomonas palustris TIE-1.</title>
        <authorList>
            <person name="Kulkarni G."/>
            <person name="Wu C.H."/>
            <person name="Newman D.K."/>
        </authorList>
    </citation>
    <scope>INDUCTION</scope>
    <source>
        <strain>TIE-1</strain>
    </source>
</reference>
<name>HPNP_RHOPT</name>
<keyword id="KW-0408">Iron</keyword>
<keyword id="KW-0411">Iron-sulfur</keyword>
<keyword id="KW-0479">Metal-binding</keyword>
<keyword id="KW-0489">Methyltransferase</keyword>
<keyword id="KW-0949">S-adenosyl-L-methionine</keyword>
<keyword id="KW-0808">Transferase</keyword>
<proteinExistence type="evidence at protein level"/>
<accession>B3QHD1</accession>
<feature type="chain" id="PRO_0000434048" description="Hopanoid C-2 methylase">
    <location>
        <begin position="1"/>
        <end position="527"/>
    </location>
</feature>
<feature type="domain" description="B12-binding" evidence="6">
    <location>
        <begin position="36"/>
        <end position="148"/>
    </location>
</feature>
<feature type="domain" description="Radical SAM core" evidence="2">
    <location>
        <begin position="173"/>
        <end position="408"/>
    </location>
</feature>
<feature type="binding site" evidence="1">
    <location>
        <position position="189"/>
    </location>
    <ligand>
        <name>[4Fe-4S] cluster</name>
        <dbReference type="ChEBI" id="CHEBI:49883"/>
        <note>4Fe-4S-S-AdoMet</note>
    </ligand>
</feature>
<feature type="binding site" evidence="1">
    <location>
        <position position="193"/>
    </location>
    <ligand>
        <name>[4Fe-4S] cluster</name>
        <dbReference type="ChEBI" id="CHEBI:49883"/>
        <note>4Fe-4S-S-AdoMet</note>
    </ligand>
</feature>
<feature type="binding site" evidence="1">
    <location>
        <position position="196"/>
    </location>
    <ligand>
        <name>[4Fe-4S] cluster</name>
        <dbReference type="ChEBI" id="CHEBI:49883"/>
        <note>4Fe-4S-S-AdoMet</note>
    </ligand>
</feature>